<proteinExistence type="evidence at protein level"/>
<sequence>MAAIHINHDVFNKYHTNGKLRLTTGYVQEAIENNGYPGHDGIVQVLKGKVEQGEQLGHAFTFRIRISDGVFQYNALMSADIDDQIKREVEHLVEGTIIALTKFEIYDQGEGAKNCFLIKGYKILSRYHQVLTSPEVKPRSHSGKPDEHKGYRPNIIIEDVWPEAEGMAADYQENMANPPAAKAPKREFGEEASYNRAAAPEATRARAVPPPARRTASNTERGVMPIAMVTPYVSNFKIHGMVSRKEEIRTFPAKNTKVFNFEITDSNGDTIRCTAFNEVAESLYTTITENLSYYLSGGSVKQANKKFNNTGHDYEITLRSDSIIEAGGELLAAPKLILKRVKLGEIAGYAGQLIDVLVVVEKMDPEATEFTSKAGKSLIKREMELIDESGALVRLTLWGDEATKALVDDYVQKVIAFKGVIPREFNGGFSLGTGSATRIISVPEIAGVSELYDWYANVKPTTEVKMMSQAAGGSNEAPRTIAGLQEMQFGKDSDKGDYATVKAMITRVNPTNALYRGCASEGCQKKLVGENGDYRCEKCNKNMNKFKWLYMMQFELSDETGQVYVTAFGDSAAKIVGKSAAELGELHDESPDEYNAIFERLQFVPKMWRLRCKMDSYNEEVRQKMTVYGVDDVNQDKYIENLKQMIEQMQQMSDY</sequence>
<name>RFA1_CAEEL</name>
<keyword id="KW-0235">DNA replication</keyword>
<keyword id="KW-0238">DNA-binding</keyword>
<keyword id="KW-0479">Metal-binding</keyword>
<keyword id="KW-0539">Nucleus</keyword>
<keyword id="KW-1185">Reference proteome</keyword>
<keyword id="KW-0862">Zinc</keyword>
<keyword id="KW-0863">Zinc-finger</keyword>
<feature type="chain" id="PRO_0000097257" description="Probable replication factor A 73 kDa subunit">
    <location>
        <begin position="1"/>
        <end position="655"/>
    </location>
</feature>
<feature type="DNA-binding region" description="OB">
    <location>
        <begin position="236"/>
        <end position="326"/>
    </location>
</feature>
<feature type="zinc finger region" description="C4-type" evidence="3">
    <location>
        <begin position="518"/>
        <end position="539"/>
    </location>
</feature>
<feature type="region of interest" description="Disordered" evidence="4">
    <location>
        <begin position="195"/>
        <end position="217"/>
    </location>
</feature>
<feature type="compositionally biased region" description="Low complexity" evidence="4">
    <location>
        <begin position="196"/>
        <end position="207"/>
    </location>
</feature>
<dbReference type="EMBL" id="BX284602">
    <property type="protein sequence ID" value="CCD62042.1"/>
    <property type="molecule type" value="Genomic_DNA"/>
</dbReference>
<dbReference type="PIR" id="T34219">
    <property type="entry name" value="T34219"/>
</dbReference>
<dbReference type="RefSeq" id="NP_495606.1">
    <property type="nucleotide sequence ID" value="NM_063205.7"/>
</dbReference>
<dbReference type="SMR" id="Q19537"/>
<dbReference type="BioGRID" id="39572">
    <property type="interactions" value="27"/>
</dbReference>
<dbReference type="DIP" id="DIP-26609N"/>
<dbReference type="FunCoup" id="Q19537">
    <property type="interactions" value="3104"/>
</dbReference>
<dbReference type="IntAct" id="Q19537">
    <property type="interactions" value="2"/>
</dbReference>
<dbReference type="STRING" id="6239.F18A1.5.1"/>
<dbReference type="PaxDb" id="6239-F18A1.5"/>
<dbReference type="PeptideAtlas" id="Q19537"/>
<dbReference type="EnsemblMetazoa" id="F18A1.5.1">
    <property type="protein sequence ID" value="F18A1.5.1"/>
    <property type="gene ID" value="WBGene00017546"/>
</dbReference>
<dbReference type="GeneID" id="174238"/>
<dbReference type="KEGG" id="cel:CELE_F18A1.5"/>
<dbReference type="AGR" id="WB:WBGene00017546"/>
<dbReference type="CTD" id="174238"/>
<dbReference type="WormBase" id="F18A1.5">
    <property type="protein sequence ID" value="CE04405"/>
    <property type="gene ID" value="WBGene00017546"/>
    <property type="gene designation" value="rpa-1"/>
</dbReference>
<dbReference type="eggNOG" id="KOG0851">
    <property type="taxonomic scope" value="Eukaryota"/>
</dbReference>
<dbReference type="GeneTree" id="ENSGT00390000012403"/>
<dbReference type="HOGENOM" id="CLU_012393_2_1_1"/>
<dbReference type="InParanoid" id="Q19537"/>
<dbReference type="OMA" id="VIRAVFW"/>
<dbReference type="OrthoDB" id="1751331at2759"/>
<dbReference type="PhylomeDB" id="Q19537"/>
<dbReference type="Reactome" id="R-CEL-110312">
    <property type="pathway name" value="Translesion synthesis by REV1"/>
</dbReference>
<dbReference type="Reactome" id="R-CEL-110314">
    <property type="pathway name" value="Recognition of DNA damage by PCNA-containing replication complex"/>
</dbReference>
<dbReference type="Reactome" id="R-CEL-110320">
    <property type="pathway name" value="Translesion Synthesis by POLH"/>
</dbReference>
<dbReference type="Reactome" id="R-CEL-176187">
    <property type="pathway name" value="Activation of ATR in response to replication stress"/>
</dbReference>
<dbReference type="Reactome" id="R-CEL-5651801">
    <property type="pathway name" value="PCNA-Dependent Long Patch Base Excision Repair"/>
</dbReference>
<dbReference type="Reactome" id="R-CEL-5655862">
    <property type="pathway name" value="Translesion synthesis by POLK"/>
</dbReference>
<dbReference type="Reactome" id="R-CEL-5656121">
    <property type="pathway name" value="Translesion synthesis by POLI"/>
</dbReference>
<dbReference type="Reactome" id="R-CEL-5656169">
    <property type="pathway name" value="Termination of translesion DNA synthesis"/>
</dbReference>
<dbReference type="Reactome" id="R-CEL-5693607">
    <property type="pathway name" value="Processing of DNA double-strand break ends"/>
</dbReference>
<dbReference type="Reactome" id="R-CEL-5696397">
    <property type="pathway name" value="Gap-filling DNA repair synthesis and ligation in GG-NER"/>
</dbReference>
<dbReference type="Reactome" id="R-CEL-5696400">
    <property type="pathway name" value="Dual Incision in GG-NER"/>
</dbReference>
<dbReference type="Reactome" id="R-CEL-6782135">
    <property type="pathway name" value="Dual incision in TC-NER"/>
</dbReference>
<dbReference type="Reactome" id="R-CEL-6782210">
    <property type="pathway name" value="Gap-filling DNA repair synthesis and ligation in TC-NER"/>
</dbReference>
<dbReference type="Reactome" id="R-CEL-68962">
    <property type="pathway name" value="Activation of the pre-replicative complex"/>
</dbReference>
<dbReference type="Reactome" id="R-CEL-69166">
    <property type="pathway name" value="Removal of the Flap Intermediate"/>
</dbReference>
<dbReference type="PRO" id="PR:Q19537"/>
<dbReference type="Proteomes" id="UP000001940">
    <property type="component" value="Chromosome II"/>
</dbReference>
<dbReference type="Bgee" id="WBGene00017546">
    <property type="expression patterns" value="Expressed in germ line (C elegans) and 4 other cell types or tissues"/>
</dbReference>
<dbReference type="GO" id="GO:0005662">
    <property type="term" value="C:DNA replication factor A complex"/>
    <property type="evidence" value="ECO:0000250"/>
    <property type="project" value="UniProtKB"/>
</dbReference>
<dbReference type="GO" id="GO:0005654">
    <property type="term" value="C:nucleoplasm"/>
    <property type="evidence" value="ECO:0000314"/>
    <property type="project" value="WormBase"/>
</dbReference>
<dbReference type="GO" id="GO:0005634">
    <property type="term" value="C:nucleus"/>
    <property type="evidence" value="ECO:0000314"/>
    <property type="project" value="WormBase"/>
</dbReference>
<dbReference type="GO" id="GO:0003684">
    <property type="term" value="F:damaged DNA binding"/>
    <property type="evidence" value="ECO:0000318"/>
    <property type="project" value="GO_Central"/>
</dbReference>
<dbReference type="GO" id="GO:0019899">
    <property type="term" value="F:enzyme binding"/>
    <property type="evidence" value="ECO:0000353"/>
    <property type="project" value="WormBase"/>
</dbReference>
<dbReference type="GO" id="GO:0003697">
    <property type="term" value="F:single-stranded DNA binding"/>
    <property type="evidence" value="ECO:0000250"/>
    <property type="project" value="UniProtKB"/>
</dbReference>
<dbReference type="GO" id="GO:0043047">
    <property type="term" value="F:single-stranded telomeric DNA binding"/>
    <property type="evidence" value="ECO:0000318"/>
    <property type="project" value="GO_Central"/>
</dbReference>
<dbReference type="GO" id="GO:0008270">
    <property type="term" value="F:zinc ion binding"/>
    <property type="evidence" value="ECO:0007669"/>
    <property type="project" value="UniProtKB-KW"/>
</dbReference>
<dbReference type="GO" id="GO:0006260">
    <property type="term" value="P:DNA replication"/>
    <property type="evidence" value="ECO:0000250"/>
    <property type="project" value="UniProtKB"/>
</dbReference>
<dbReference type="GO" id="GO:0000724">
    <property type="term" value="P:double-strand break repair via homologous recombination"/>
    <property type="evidence" value="ECO:0000318"/>
    <property type="project" value="GO_Central"/>
</dbReference>
<dbReference type="GO" id="GO:0051321">
    <property type="term" value="P:meiotic cell cycle"/>
    <property type="evidence" value="ECO:0000318"/>
    <property type="project" value="GO_Central"/>
</dbReference>
<dbReference type="GO" id="GO:0006289">
    <property type="term" value="P:nucleotide-excision repair"/>
    <property type="evidence" value="ECO:0000318"/>
    <property type="project" value="GO_Central"/>
</dbReference>
<dbReference type="GO" id="GO:0110039">
    <property type="term" value="P:positive regulation of nematode male tail tip morphogenesis"/>
    <property type="evidence" value="ECO:0000315"/>
    <property type="project" value="UniProtKB"/>
</dbReference>
<dbReference type="GO" id="GO:0007004">
    <property type="term" value="P:telomere maintenance via telomerase"/>
    <property type="evidence" value="ECO:0000318"/>
    <property type="project" value="GO_Central"/>
</dbReference>
<dbReference type="CDD" id="cd04474">
    <property type="entry name" value="RPA1_DBD_A"/>
    <property type="match status" value="1"/>
</dbReference>
<dbReference type="CDD" id="cd04475">
    <property type="entry name" value="RPA1_DBD_B"/>
    <property type="match status" value="1"/>
</dbReference>
<dbReference type="CDD" id="cd04476">
    <property type="entry name" value="RPA1_DBD_C"/>
    <property type="match status" value="1"/>
</dbReference>
<dbReference type="FunFam" id="2.40.50.140:FF:000041">
    <property type="entry name" value="Replication protein A subunit"/>
    <property type="match status" value="1"/>
</dbReference>
<dbReference type="FunFam" id="2.40.50.140:FF:000090">
    <property type="entry name" value="Replication protein A subunit"/>
    <property type="match status" value="1"/>
</dbReference>
<dbReference type="Gene3D" id="2.40.50.140">
    <property type="entry name" value="Nucleic acid-binding proteins"/>
    <property type="match status" value="4"/>
</dbReference>
<dbReference type="InterPro" id="IPR047192">
    <property type="entry name" value="Euk_RPA1_DBD_C"/>
</dbReference>
<dbReference type="InterPro" id="IPR012340">
    <property type="entry name" value="NA-bd_OB-fold"/>
</dbReference>
<dbReference type="InterPro" id="IPR013955">
    <property type="entry name" value="Rep_factor-A_C"/>
</dbReference>
<dbReference type="InterPro" id="IPR031657">
    <property type="entry name" value="REPA_OB_2"/>
</dbReference>
<dbReference type="InterPro" id="IPR004591">
    <property type="entry name" value="Rfa1"/>
</dbReference>
<dbReference type="NCBIfam" id="TIGR00617">
    <property type="entry name" value="rpa1"/>
    <property type="match status" value="1"/>
</dbReference>
<dbReference type="PANTHER" id="PTHR47165">
    <property type="entry name" value="OS03G0429900 PROTEIN"/>
    <property type="match status" value="1"/>
</dbReference>
<dbReference type="PANTHER" id="PTHR47165:SF4">
    <property type="entry name" value="OS03G0429900 PROTEIN"/>
    <property type="match status" value="1"/>
</dbReference>
<dbReference type="Pfam" id="PF08646">
    <property type="entry name" value="Rep_fac-A_C"/>
    <property type="match status" value="1"/>
</dbReference>
<dbReference type="Pfam" id="PF16900">
    <property type="entry name" value="REPA_OB_2"/>
    <property type="match status" value="1"/>
</dbReference>
<dbReference type="SUPFAM" id="SSF50249">
    <property type="entry name" value="Nucleic acid-binding proteins"/>
    <property type="match status" value="3"/>
</dbReference>
<gene>
    <name evidence="7" type="primary">rpa-1</name>
    <name evidence="7" type="ORF">F18A1.5</name>
</gene>
<organism>
    <name type="scientific">Caenorhabditis elegans</name>
    <dbReference type="NCBI Taxonomy" id="6239"/>
    <lineage>
        <taxon>Eukaryota</taxon>
        <taxon>Metazoa</taxon>
        <taxon>Ecdysozoa</taxon>
        <taxon>Nematoda</taxon>
        <taxon>Chromadorea</taxon>
        <taxon>Rhabditida</taxon>
        <taxon>Rhabditina</taxon>
        <taxon>Rhabditomorpha</taxon>
        <taxon>Rhabditoidea</taxon>
        <taxon>Rhabditidae</taxon>
        <taxon>Peloderinae</taxon>
        <taxon>Caenorhabditis</taxon>
    </lineage>
</organism>
<evidence type="ECO:0000250" key="1"/>
<evidence type="ECO:0000250" key="2">
    <source>
        <dbReference type="UniProtKB" id="P27694"/>
    </source>
</evidence>
<evidence type="ECO:0000255" key="3"/>
<evidence type="ECO:0000256" key="4">
    <source>
        <dbReference type="SAM" id="MobiDB-lite"/>
    </source>
</evidence>
<evidence type="ECO:0000269" key="5">
    <source>
    </source>
</evidence>
<evidence type="ECO:0000305" key="6"/>
<evidence type="ECO:0000312" key="7">
    <source>
        <dbReference type="WormBase" id="F18A1.5"/>
    </source>
</evidence>
<accession>Q19537</accession>
<comment type="function">
    <text evidence="2">As part of the heterotrimeric replication protein A complex (RPA/RP-A), binds and stabilizes single-stranded DNA intermediates, that form during DNA replication or upon DNA stress. It prevents their reannealing and in parallel, recruits and activates different proteins and complexes involved in DNA metabolism. Thereby, it plays an essential role both in DNA replication and the cellular response to DNA damage.</text>
</comment>
<comment type="subunit">
    <text evidence="1">Component of the heterotrimeric canonical replication protein A complex (RPA).</text>
</comment>
<comment type="interaction">
    <interactant intactId="EBI-325415">
        <id>Q19537</id>
    </interactant>
    <interactant intactId="EBI-325404">
        <id>Q95Y97</id>
        <label>rpa-2</label>
    </interactant>
    <organismsDiffer>false</organismsDiffer>
    <experiments>3</experiments>
</comment>
<comment type="subcellular location">
    <subcellularLocation>
        <location evidence="5">Nucleus</location>
    </subcellularLocation>
</comment>
<comment type="similarity">
    <text evidence="6">Belongs to the replication factor A protein 1 family.</text>
</comment>
<protein>
    <recommendedName>
        <fullName>Probable replication factor A 73 kDa subunit</fullName>
    </recommendedName>
    <alternativeName>
        <fullName>RP-A p73</fullName>
    </alternativeName>
    <alternativeName>
        <fullName>Replication factor A protein 1</fullName>
        <shortName>RF-A protein 1</shortName>
    </alternativeName>
</protein>
<reference key="1">
    <citation type="journal article" date="1998" name="Science">
        <title>Genome sequence of the nematode C. elegans: a platform for investigating biology.</title>
        <authorList>
            <consortium name="The C. elegans sequencing consortium"/>
        </authorList>
    </citation>
    <scope>NUCLEOTIDE SEQUENCE [LARGE SCALE GENOMIC DNA]</scope>
    <source>
        <strain>Bristol N2</strain>
    </source>
</reference>
<reference key="2">
    <citation type="journal article" date="2018" name="PLoS Genet.">
        <title>BRCA1-BARD1 associate with the synaptonemal complex and pro-crossover factors and influence RAD-51 dynamics during Caenorhabditis elegans meiosis.</title>
        <authorList>
            <person name="Janisiw E."/>
            <person name="Dello Stritto M.R."/>
            <person name="Jantsch V."/>
            <person name="Silva N."/>
        </authorList>
    </citation>
    <scope>SUBCELLULAR LOCATION</scope>
</reference>